<gene>
    <name evidence="1" type="primary">atpC</name>
    <name type="ordered locus">lpg2981</name>
</gene>
<protein>
    <recommendedName>
        <fullName evidence="1">ATP synthase epsilon chain</fullName>
    </recommendedName>
    <alternativeName>
        <fullName evidence="1">ATP synthase F1 sector epsilon subunit</fullName>
    </alternativeName>
    <alternativeName>
        <fullName evidence="1">F-ATPase epsilon subunit</fullName>
    </alternativeName>
</protein>
<comment type="function">
    <text evidence="1">Produces ATP from ADP in the presence of a proton gradient across the membrane.</text>
</comment>
<comment type="subunit">
    <text>F-type ATPases have 2 components, CF(1) - the catalytic core - and CF(0) - the membrane proton channel. CF(1) has five subunits: alpha(3), beta(3), gamma(1), delta(1), epsilon(1). CF(0) has three main subunits: a, b and c.</text>
</comment>
<comment type="subcellular location">
    <subcellularLocation>
        <location evidence="1">Cell inner membrane</location>
        <topology evidence="1">Peripheral membrane protein</topology>
    </subcellularLocation>
</comment>
<comment type="similarity">
    <text evidence="1">Belongs to the ATPase epsilon chain family.</text>
</comment>
<dbReference type="EMBL" id="AE017354">
    <property type="protein sequence ID" value="AAU29026.1"/>
    <property type="molecule type" value="Genomic_DNA"/>
</dbReference>
<dbReference type="RefSeq" id="WP_010948665.1">
    <property type="nucleotide sequence ID" value="NC_002942.5"/>
</dbReference>
<dbReference type="RefSeq" id="YP_096973.1">
    <property type="nucleotide sequence ID" value="NC_002942.5"/>
</dbReference>
<dbReference type="SMR" id="Q5ZRA2"/>
<dbReference type="STRING" id="272624.lpg2981"/>
<dbReference type="PaxDb" id="272624-lpg2981"/>
<dbReference type="KEGG" id="lpn:lpg2981"/>
<dbReference type="PATRIC" id="fig|272624.6.peg.3187"/>
<dbReference type="eggNOG" id="COG0355">
    <property type="taxonomic scope" value="Bacteria"/>
</dbReference>
<dbReference type="HOGENOM" id="CLU_084338_2_0_6"/>
<dbReference type="OrthoDB" id="9791445at2"/>
<dbReference type="Proteomes" id="UP000000609">
    <property type="component" value="Chromosome"/>
</dbReference>
<dbReference type="GO" id="GO:0005886">
    <property type="term" value="C:plasma membrane"/>
    <property type="evidence" value="ECO:0007669"/>
    <property type="project" value="UniProtKB-SubCell"/>
</dbReference>
<dbReference type="GO" id="GO:0045259">
    <property type="term" value="C:proton-transporting ATP synthase complex"/>
    <property type="evidence" value="ECO:0007669"/>
    <property type="project" value="UniProtKB-KW"/>
</dbReference>
<dbReference type="GO" id="GO:0005524">
    <property type="term" value="F:ATP binding"/>
    <property type="evidence" value="ECO:0007669"/>
    <property type="project" value="UniProtKB-UniRule"/>
</dbReference>
<dbReference type="GO" id="GO:0046933">
    <property type="term" value="F:proton-transporting ATP synthase activity, rotational mechanism"/>
    <property type="evidence" value="ECO:0007669"/>
    <property type="project" value="UniProtKB-UniRule"/>
</dbReference>
<dbReference type="CDD" id="cd12152">
    <property type="entry name" value="F1-ATPase_delta"/>
    <property type="match status" value="1"/>
</dbReference>
<dbReference type="FunFam" id="1.20.5.440:FF:000001">
    <property type="entry name" value="ATP synthase epsilon chain"/>
    <property type="match status" value="1"/>
</dbReference>
<dbReference type="FunFam" id="2.60.15.10:FF:000001">
    <property type="entry name" value="ATP synthase epsilon chain"/>
    <property type="match status" value="1"/>
</dbReference>
<dbReference type="Gene3D" id="1.20.5.440">
    <property type="entry name" value="ATP synthase delta/epsilon subunit, C-terminal domain"/>
    <property type="match status" value="1"/>
</dbReference>
<dbReference type="Gene3D" id="2.60.15.10">
    <property type="entry name" value="F0F1 ATP synthase delta/epsilon subunit, N-terminal"/>
    <property type="match status" value="1"/>
</dbReference>
<dbReference type="HAMAP" id="MF_00530">
    <property type="entry name" value="ATP_synth_epsil_bac"/>
    <property type="match status" value="1"/>
</dbReference>
<dbReference type="InterPro" id="IPR036794">
    <property type="entry name" value="ATP_F1_dsu/esu_C_sf"/>
</dbReference>
<dbReference type="InterPro" id="IPR001469">
    <property type="entry name" value="ATP_synth_F1_dsu/esu"/>
</dbReference>
<dbReference type="InterPro" id="IPR020546">
    <property type="entry name" value="ATP_synth_F1_dsu/esu_N"/>
</dbReference>
<dbReference type="InterPro" id="IPR020547">
    <property type="entry name" value="ATP_synth_F1_esu_C"/>
</dbReference>
<dbReference type="InterPro" id="IPR036771">
    <property type="entry name" value="ATPsynth_dsu/esu_N"/>
</dbReference>
<dbReference type="NCBIfam" id="TIGR01216">
    <property type="entry name" value="ATP_synt_epsi"/>
    <property type="match status" value="1"/>
</dbReference>
<dbReference type="NCBIfam" id="NF001847">
    <property type="entry name" value="PRK00571.1-4"/>
    <property type="match status" value="1"/>
</dbReference>
<dbReference type="PANTHER" id="PTHR13822">
    <property type="entry name" value="ATP SYNTHASE DELTA/EPSILON CHAIN"/>
    <property type="match status" value="1"/>
</dbReference>
<dbReference type="PANTHER" id="PTHR13822:SF10">
    <property type="entry name" value="ATP SYNTHASE EPSILON CHAIN, CHLOROPLASTIC"/>
    <property type="match status" value="1"/>
</dbReference>
<dbReference type="Pfam" id="PF00401">
    <property type="entry name" value="ATP-synt_DE"/>
    <property type="match status" value="1"/>
</dbReference>
<dbReference type="Pfam" id="PF02823">
    <property type="entry name" value="ATP-synt_DE_N"/>
    <property type="match status" value="1"/>
</dbReference>
<dbReference type="SUPFAM" id="SSF46604">
    <property type="entry name" value="Epsilon subunit of F1F0-ATP synthase C-terminal domain"/>
    <property type="match status" value="1"/>
</dbReference>
<dbReference type="SUPFAM" id="SSF51344">
    <property type="entry name" value="Epsilon subunit of F1F0-ATP synthase N-terminal domain"/>
    <property type="match status" value="1"/>
</dbReference>
<name>ATPE_LEGPH</name>
<accession>Q5ZRA2</accession>
<organism>
    <name type="scientific">Legionella pneumophila subsp. pneumophila (strain Philadelphia 1 / ATCC 33152 / DSM 7513)</name>
    <dbReference type="NCBI Taxonomy" id="272624"/>
    <lineage>
        <taxon>Bacteria</taxon>
        <taxon>Pseudomonadati</taxon>
        <taxon>Pseudomonadota</taxon>
        <taxon>Gammaproteobacteria</taxon>
        <taxon>Legionellales</taxon>
        <taxon>Legionellaceae</taxon>
        <taxon>Legionella</taxon>
    </lineage>
</organism>
<reference key="1">
    <citation type="journal article" date="2004" name="Science">
        <title>The genomic sequence of the accidental pathogen Legionella pneumophila.</title>
        <authorList>
            <person name="Chien M."/>
            <person name="Morozova I."/>
            <person name="Shi S."/>
            <person name="Sheng H."/>
            <person name="Chen J."/>
            <person name="Gomez S.M."/>
            <person name="Asamani G."/>
            <person name="Hill K."/>
            <person name="Nuara J."/>
            <person name="Feder M."/>
            <person name="Rineer J."/>
            <person name="Greenberg J.J."/>
            <person name="Steshenko V."/>
            <person name="Park S.H."/>
            <person name="Zhao B."/>
            <person name="Teplitskaya E."/>
            <person name="Edwards J.R."/>
            <person name="Pampou S."/>
            <person name="Georghiou A."/>
            <person name="Chou I.-C."/>
            <person name="Iannuccilli W."/>
            <person name="Ulz M.E."/>
            <person name="Kim D.H."/>
            <person name="Geringer-Sameth A."/>
            <person name="Goldsberry C."/>
            <person name="Morozov P."/>
            <person name="Fischer S.G."/>
            <person name="Segal G."/>
            <person name="Qu X."/>
            <person name="Rzhetsky A."/>
            <person name="Zhang P."/>
            <person name="Cayanis E."/>
            <person name="De Jong P.J."/>
            <person name="Ju J."/>
            <person name="Kalachikov S."/>
            <person name="Shuman H.A."/>
            <person name="Russo J.J."/>
        </authorList>
    </citation>
    <scope>NUCLEOTIDE SEQUENCE [LARGE SCALE GENOMIC DNA]</scope>
    <source>
        <strain>Philadelphia 1 / ATCC 33152 / DSM 7513</strain>
    </source>
</reference>
<sequence>MSITTHLDIVSAEHEIFSGVVEMVVATGELGEIGITPGHAPLLTVLRPGEVRITLQGGTQDIYYVQGGMLEVQPHCVTILADVAERAEHLDEAAALAAKAKAEAAIASKGGDIDYSVAAAELARAVAQIRAIQKTRKKMK</sequence>
<keyword id="KW-0066">ATP synthesis</keyword>
<keyword id="KW-0997">Cell inner membrane</keyword>
<keyword id="KW-1003">Cell membrane</keyword>
<keyword id="KW-0139">CF(1)</keyword>
<keyword id="KW-0375">Hydrogen ion transport</keyword>
<keyword id="KW-0406">Ion transport</keyword>
<keyword id="KW-0472">Membrane</keyword>
<keyword id="KW-1185">Reference proteome</keyword>
<keyword id="KW-0813">Transport</keyword>
<evidence type="ECO:0000255" key="1">
    <source>
        <dbReference type="HAMAP-Rule" id="MF_00530"/>
    </source>
</evidence>
<proteinExistence type="inferred from homology"/>
<feature type="chain" id="PRO_0000265834" description="ATP synthase epsilon chain">
    <location>
        <begin position="1"/>
        <end position="140"/>
    </location>
</feature>